<evidence type="ECO:0000250" key="1"/>
<evidence type="ECO:0000255" key="2">
    <source>
        <dbReference type="HAMAP-Rule" id="MF_01676"/>
    </source>
</evidence>
<accession>Q2IMQ8</accession>
<keyword id="KW-0049">Antioxidant</keyword>
<keyword id="KW-1015">Disulfide bond</keyword>
<keyword id="KW-0560">Oxidoreductase</keyword>
<keyword id="KW-0575">Peroxidase</keyword>
<keyword id="KW-0676">Redox-active center</keyword>
<keyword id="KW-1185">Reference proteome</keyword>
<comment type="function">
    <text evidence="2">Antioxidant protein with alkyl hydroperoxidase activity. Required for the reduction of the AhpC active site cysteine residues and for the regeneration of the AhpC enzyme activity.</text>
</comment>
<comment type="catalytic activity">
    <reaction evidence="2">
        <text>N(6)-[(R)-dihydrolipoyl]-L-lysyl-[lipoyl-carrier protein] + a hydroperoxide = N(6)-[(R)-lipoyl]-L-lysyl-[lipoyl-carrier protein] + an alcohol + H2O</text>
        <dbReference type="Rhea" id="RHEA:62636"/>
        <dbReference type="Rhea" id="RHEA-COMP:10502"/>
        <dbReference type="Rhea" id="RHEA-COMP:16355"/>
        <dbReference type="ChEBI" id="CHEBI:15377"/>
        <dbReference type="ChEBI" id="CHEBI:30879"/>
        <dbReference type="ChEBI" id="CHEBI:35924"/>
        <dbReference type="ChEBI" id="CHEBI:83099"/>
        <dbReference type="ChEBI" id="CHEBI:83100"/>
        <dbReference type="EC" id="1.11.1.28"/>
    </reaction>
</comment>
<comment type="similarity">
    <text evidence="2">Belongs to the AhpD family.</text>
</comment>
<proteinExistence type="inferred from homology"/>
<sequence>MAALDAIREALPEPARDIKLNLQAVLQPGPLTPAQRWGVAVATAAAARNERLLAAILADARAEVEPAVVEDALAAAAVMAMNNVYYRFRHMVGKPSYSEKPARLRMNRLVKPAASKLDFELFALAVSAVNGCETCVRSHEQVVVGGGVSEDQVHDAVRIAAVVHAAAVALELAGHAAAPSAAAAAG</sequence>
<organism>
    <name type="scientific">Anaeromyxobacter dehalogenans (strain 2CP-C)</name>
    <dbReference type="NCBI Taxonomy" id="290397"/>
    <lineage>
        <taxon>Bacteria</taxon>
        <taxon>Pseudomonadati</taxon>
        <taxon>Myxococcota</taxon>
        <taxon>Myxococcia</taxon>
        <taxon>Myxococcales</taxon>
        <taxon>Cystobacterineae</taxon>
        <taxon>Anaeromyxobacteraceae</taxon>
        <taxon>Anaeromyxobacter</taxon>
    </lineage>
</organism>
<feature type="chain" id="PRO_0000359468" description="Alkyl hydroperoxide reductase AhpD">
    <location>
        <begin position="1"/>
        <end position="186"/>
    </location>
</feature>
<feature type="active site" description="Proton donor" evidence="2">
    <location>
        <position position="132"/>
    </location>
</feature>
<feature type="active site" description="Cysteine sulfenic acid (-SOH) intermediate" evidence="2">
    <location>
        <position position="135"/>
    </location>
</feature>
<feature type="disulfide bond" evidence="1">
    <location>
        <begin position="132"/>
        <end position="135"/>
    </location>
</feature>
<feature type="disulfide bond" description="Interchain (with AhpC); in linked form" evidence="2">
    <location>
        <position position="135"/>
    </location>
</feature>
<protein>
    <recommendedName>
        <fullName evidence="2">Alkyl hydroperoxide reductase AhpD</fullName>
        <ecNumber evidence="2">1.11.1.28</ecNumber>
    </recommendedName>
    <alternativeName>
        <fullName evidence="2">Alkylhydroperoxidase AhpD</fullName>
    </alternativeName>
</protein>
<gene>
    <name evidence="2" type="primary">ahpD</name>
    <name type="ordered locus">Adeh_0314</name>
</gene>
<reference key="1">
    <citation type="submission" date="2006-01" db="EMBL/GenBank/DDBJ databases">
        <title>Complete sequence of Anaeromyxobacter dehalogenans 2CP-C.</title>
        <authorList>
            <person name="Copeland A."/>
            <person name="Lucas S."/>
            <person name="Lapidus A."/>
            <person name="Barry K."/>
            <person name="Detter J.C."/>
            <person name="Glavina T."/>
            <person name="Hammon N."/>
            <person name="Israni S."/>
            <person name="Pitluck S."/>
            <person name="Brettin T."/>
            <person name="Bruce D."/>
            <person name="Han C."/>
            <person name="Tapia R."/>
            <person name="Gilna P."/>
            <person name="Kiss H."/>
            <person name="Schmutz J."/>
            <person name="Larimer F."/>
            <person name="Land M."/>
            <person name="Kyrpides N."/>
            <person name="Anderson I."/>
            <person name="Sanford R.A."/>
            <person name="Ritalahti K.M."/>
            <person name="Thomas H.S."/>
            <person name="Kirby J.R."/>
            <person name="Zhulin I.B."/>
            <person name="Loeffler F.E."/>
            <person name="Richardson P."/>
        </authorList>
    </citation>
    <scope>NUCLEOTIDE SEQUENCE [LARGE SCALE GENOMIC DNA]</scope>
    <source>
        <strain>2CP-C</strain>
    </source>
</reference>
<name>AHPD_ANADE</name>
<dbReference type="EC" id="1.11.1.28" evidence="2"/>
<dbReference type="EMBL" id="CP000251">
    <property type="protein sequence ID" value="ABC80090.1"/>
    <property type="molecule type" value="Genomic_DNA"/>
</dbReference>
<dbReference type="RefSeq" id="WP_011419373.1">
    <property type="nucleotide sequence ID" value="NC_007760.1"/>
</dbReference>
<dbReference type="SMR" id="Q2IMQ8"/>
<dbReference type="STRING" id="290397.Adeh_0314"/>
<dbReference type="PeroxiBase" id="4611">
    <property type="entry name" value="AdAhpD"/>
</dbReference>
<dbReference type="KEGG" id="ade:Adeh_0314"/>
<dbReference type="eggNOG" id="COG0599">
    <property type="taxonomic scope" value="Bacteria"/>
</dbReference>
<dbReference type="HOGENOM" id="CLU_105328_0_0_7"/>
<dbReference type="OrthoDB" id="9801997at2"/>
<dbReference type="Proteomes" id="UP000001935">
    <property type="component" value="Chromosome"/>
</dbReference>
<dbReference type="GO" id="GO:0008785">
    <property type="term" value="F:alkyl hydroperoxide reductase activity"/>
    <property type="evidence" value="ECO:0007669"/>
    <property type="project" value="UniProtKB-UniRule"/>
</dbReference>
<dbReference type="GO" id="GO:0015036">
    <property type="term" value="F:disulfide oxidoreductase activity"/>
    <property type="evidence" value="ECO:0007669"/>
    <property type="project" value="TreeGrafter"/>
</dbReference>
<dbReference type="GO" id="GO:0032843">
    <property type="term" value="F:hydroperoxide reductase activity"/>
    <property type="evidence" value="ECO:0007669"/>
    <property type="project" value="InterPro"/>
</dbReference>
<dbReference type="GO" id="GO:0051920">
    <property type="term" value="F:peroxiredoxin activity"/>
    <property type="evidence" value="ECO:0007669"/>
    <property type="project" value="InterPro"/>
</dbReference>
<dbReference type="GO" id="GO:0045454">
    <property type="term" value="P:cell redox homeostasis"/>
    <property type="evidence" value="ECO:0007669"/>
    <property type="project" value="TreeGrafter"/>
</dbReference>
<dbReference type="GO" id="GO:0006979">
    <property type="term" value="P:response to oxidative stress"/>
    <property type="evidence" value="ECO:0007669"/>
    <property type="project" value="InterPro"/>
</dbReference>
<dbReference type="Gene3D" id="1.20.1290.10">
    <property type="entry name" value="AhpD-like"/>
    <property type="match status" value="1"/>
</dbReference>
<dbReference type="HAMAP" id="MF_01676">
    <property type="entry name" value="AhpD"/>
    <property type="match status" value="1"/>
</dbReference>
<dbReference type="InterPro" id="IPR004674">
    <property type="entry name" value="AhpD"/>
</dbReference>
<dbReference type="InterPro" id="IPR029032">
    <property type="entry name" value="AhpD-like"/>
</dbReference>
<dbReference type="InterPro" id="IPR004675">
    <property type="entry name" value="AhpD_core"/>
</dbReference>
<dbReference type="InterPro" id="IPR003779">
    <property type="entry name" value="CMD-like"/>
</dbReference>
<dbReference type="NCBIfam" id="TIGR00778">
    <property type="entry name" value="ahpD_dom"/>
    <property type="match status" value="1"/>
</dbReference>
<dbReference type="PANTHER" id="PTHR33930">
    <property type="entry name" value="ALKYL HYDROPEROXIDE REDUCTASE AHPD"/>
    <property type="match status" value="1"/>
</dbReference>
<dbReference type="PANTHER" id="PTHR33930:SF7">
    <property type="entry name" value="ALKYL HYDROPEROXIDE REDUCTASE AHPD"/>
    <property type="match status" value="1"/>
</dbReference>
<dbReference type="Pfam" id="PF02627">
    <property type="entry name" value="CMD"/>
    <property type="match status" value="1"/>
</dbReference>
<dbReference type="SUPFAM" id="SSF69118">
    <property type="entry name" value="AhpD-like"/>
    <property type="match status" value="1"/>
</dbReference>